<feature type="chain" id="PRO_1000145384" description="Peptide methionine sulfoxide reductase MsrB">
    <location>
        <begin position="1"/>
        <end position="155"/>
    </location>
</feature>
<feature type="domain" description="MsrB" evidence="2">
    <location>
        <begin position="15"/>
        <end position="137"/>
    </location>
</feature>
<feature type="active site" description="Nucleophile" evidence="2">
    <location>
        <position position="126"/>
    </location>
</feature>
<feature type="binding site" evidence="2">
    <location>
        <position position="54"/>
    </location>
    <ligand>
        <name>Zn(2+)</name>
        <dbReference type="ChEBI" id="CHEBI:29105"/>
    </ligand>
</feature>
<feature type="binding site" evidence="2">
    <location>
        <position position="57"/>
    </location>
    <ligand>
        <name>Zn(2+)</name>
        <dbReference type="ChEBI" id="CHEBI:29105"/>
    </ligand>
</feature>
<feature type="binding site" evidence="2">
    <location>
        <position position="103"/>
    </location>
    <ligand>
        <name>Zn(2+)</name>
        <dbReference type="ChEBI" id="CHEBI:29105"/>
    </ligand>
</feature>
<feature type="binding site" evidence="2">
    <location>
        <position position="106"/>
    </location>
    <ligand>
        <name>Zn(2+)</name>
        <dbReference type="ChEBI" id="CHEBI:29105"/>
    </ligand>
</feature>
<dbReference type="EC" id="1.8.4.12" evidence="1"/>
<dbReference type="EMBL" id="CP001011">
    <property type="protein sequence ID" value="ACB93325.1"/>
    <property type="molecule type" value="Genomic_DNA"/>
</dbReference>
<dbReference type="RefSeq" id="WP_004088178.1">
    <property type="nucleotide sequence ID" value="NC_010577.1"/>
</dbReference>
<dbReference type="SMR" id="B2I8Y4"/>
<dbReference type="GeneID" id="93905679"/>
<dbReference type="KEGG" id="xfn:XfasM23_1925"/>
<dbReference type="HOGENOM" id="CLU_031040_8_5_6"/>
<dbReference type="Proteomes" id="UP000001698">
    <property type="component" value="Chromosome"/>
</dbReference>
<dbReference type="GO" id="GO:0005737">
    <property type="term" value="C:cytoplasm"/>
    <property type="evidence" value="ECO:0007669"/>
    <property type="project" value="TreeGrafter"/>
</dbReference>
<dbReference type="GO" id="GO:0033743">
    <property type="term" value="F:peptide-methionine (R)-S-oxide reductase activity"/>
    <property type="evidence" value="ECO:0007669"/>
    <property type="project" value="UniProtKB-UniRule"/>
</dbReference>
<dbReference type="GO" id="GO:0008270">
    <property type="term" value="F:zinc ion binding"/>
    <property type="evidence" value="ECO:0007669"/>
    <property type="project" value="UniProtKB-UniRule"/>
</dbReference>
<dbReference type="GO" id="GO:0030091">
    <property type="term" value="P:protein repair"/>
    <property type="evidence" value="ECO:0007669"/>
    <property type="project" value="InterPro"/>
</dbReference>
<dbReference type="GO" id="GO:0006979">
    <property type="term" value="P:response to oxidative stress"/>
    <property type="evidence" value="ECO:0007669"/>
    <property type="project" value="InterPro"/>
</dbReference>
<dbReference type="FunFam" id="2.170.150.20:FF:000001">
    <property type="entry name" value="Peptide methionine sulfoxide reductase MsrB"/>
    <property type="match status" value="1"/>
</dbReference>
<dbReference type="Gene3D" id="2.170.150.20">
    <property type="entry name" value="Peptide methionine sulfoxide reductase"/>
    <property type="match status" value="1"/>
</dbReference>
<dbReference type="HAMAP" id="MF_01400">
    <property type="entry name" value="MsrB"/>
    <property type="match status" value="1"/>
</dbReference>
<dbReference type="InterPro" id="IPR028427">
    <property type="entry name" value="Met_Sox_Rdtase_MsrB"/>
</dbReference>
<dbReference type="InterPro" id="IPR002579">
    <property type="entry name" value="Met_Sox_Rdtase_MsrB_dom"/>
</dbReference>
<dbReference type="InterPro" id="IPR011057">
    <property type="entry name" value="Mss4-like_sf"/>
</dbReference>
<dbReference type="NCBIfam" id="TIGR00357">
    <property type="entry name" value="peptide-methionine (R)-S-oxide reductase MsrB"/>
    <property type="match status" value="1"/>
</dbReference>
<dbReference type="PANTHER" id="PTHR10173">
    <property type="entry name" value="METHIONINE SULFOXIDE REDUCTASE"/>
    <property type="match status" value="1"/>
</dbReference>
<dbReference type="PANTHER" id="PTHR10173:SF52">
    <property type="entry name" value="METHIONINE-R-SULFOXIDE REDUCTASE B1"/>
    <property type="match status" value="1"/>
</dbReference>
<dbReference type="Pfam" id="PF01641">
    <property type="entry name" value="SelR"/>
    <property type="match status" value="1"/>
</dbReference>
<dbReference type="SUPFAM" id="SSF51316">
    <property type="entry name" value="Mss4-like"/>
    <property type="match status" value="1"/>
</dbReference>
<dbReference type="PROSITE" id="PS51790">
    <property type="entry name" value="MSRB"/>
    <property type="match status" value="1"/>
</dbReference>
<name>MSRB_XYLF2</name>
<protein>
    <recommendedName>
        <fullName evidence="1">Peptide methionine sulfoxide reductase MsrB</fullName>
        <ecNumber evidence="1">1.8.4.12</ecNumber>
    </recommendedName>
    <alternativeName>
        <fullName evidence="1">Peptide-methionine (R)-S-oxide reductase</fullName>
    </alternativeName>
</protein>
<gene>
    <name evidence="1" type="primary">msrB</name>
    <name type="ordered locus">XfasM23_1925</name>
</gene>
<sequence length="155" mass="17568">MNVTFDLTPPSPSQREALIATLNAEERRILLQHGTEAPFCNRLLDNNQLGTYTCRLCGLPLFHSNAKFKSGTGWPSFFEPYTHTHIRKQHDTSHGMIRTEILCARCNSHLGHLFPDGPPPTYERYCLNSVSLTFIPTGTLLPDQLHRGDNTTYRT</sequence>
<keyword id="KW-0479">Metal-binding</keyword>
<keyword id="KW-0560">Oxidoreductase</keyword>
<keyword id="KW-0862">Zinc</keyword>
<organism>
    <name type="scientific">Xylella fastidiosa (strain M23)</name>
    <dbReference type="NCBI Taxonomy" id="405441"/>
    <lineage>
        <taxon>Bacteria</taxon>
        <taxon>Pseudomonadati</taxon>
        <taxon>Pseudomonadota</taxon>
        <taxon>Gammaproteobacteria</taxon>
        <taxon>Lysobacterales</taxon>
        <taxon>Lysobacteraceae</taxon>
        <taxon>Xylella</taxon>
    </lineage>
</organism>
<evidence type="ECO:0000255" key="1">
    <source>
        <dbReference type="HAMAP-Rule" id="MF_01400"/>
    </source>
</evidence>
<evidence type="ECO:0000255" key="2">
    <source>
        <dbReference type="PROSITE-ProRule" id="PRU01126"/>
    </source>
</evidence>
<comment type="catalytic activity">
    <reaction evidence="1">
        <text>L-methionyl-[protein] + [thioredoxin]-disulfide + H2O = L-methionyl-(R)-S-oxide-[protein] + [thioredoxin]-dithiol</text>
        <dbReference type="Rhea" id="RHEA:24164"/>
        <dbReference type="Rhea" id="RHEA-COMP:10698"/>
        <dbReference type="Rhea" id="RHEA-COMP:10700"/>
        <dbReference type="Rhea" id="RHEA-COMP:12313"/>
        <dbReference type="Rhea" id="RHEA-COMP:12314"/>
        <dbReference type="ChEBI" id="CHEBI:15377"/>
        <dbReference type="ChEBI" id="CHEBI:16044"/>
        <dbReference type="ChEBI" id="CHEBI:29950"/>
        <dbReference type="ChEBI" id="CHEBI:45764"/>
        <dbReference type="ChEBI" id="CHEBI:50058"/>
        <dbReference type="EC" id="1.8.4.12"/>
    </reaction>
</comment>
<comment type="cofactor">
    <cofactor evidence="1">
        <name>Zn(2+)</name>
        <dbReference type="ChEBI" id="CHEBI:29105"/>
    </cofactor>
    <text evidence="1">Binds 1 zinc ion per subunit. The zinc ion is important for the structural integrity of the protein.</text>
</comment>
<comment type="similarity">
    <text evidence="1">Belongs to the MsrB Met sulfoxide reductase family.</text>
</comment>
<accession>B2I8Y4</accession>
<reference key="1">
    <citation type="journal article" date="2010" name="J. Bacteriol.">
        <title>Whole genome sequences of two Xylella fastidiosa strains (M12 and M23) causing almond leaf scorch disease in California.</title>
        <authorList>
            <person name="Chen J."/>
            <person name="Xie G."/>
            <person name="Han S."/>
            <person name="Chertkov O."/>
            <person name="Sims D."/>
            <person name="Civerolo E.L."/>
        </authorList>
    </citation>
    <scope>NUCLEOTIDE SEQUENCE [LARGE SCALE GENOMIC DNA]</scope>
    <source>
        <strain>M23</strain>
    </source>
</reference>
<proteinExistence type="inferred from homology"/>